<keyword id="KW-0597">Phosphoprotein</keyword>
<keyword id="KW-1185">Reference proteome</keyword>
<keyword id="KW-0964">Secreted</keyword>
<dbReference type="EMBL" id="AK014271">
    <property type="protein sequence ID" value="BAB29235.1"/>
    <property type="status" value="ALT_FRAME"/>
    <property type="molecule type" value="mRNA"/>
</dbReference>
<dbReference type="EMBL" id="AC140216">
    <property type="status" value="NOT_ANNOTATED_CDS"/>
    <property type="molecule type" value="Genomic_DNA"/>
</dbReference>
<dbReference type="EMBL" id="AC161058">
    <property type="status" value="NOT_ANNOTATED_CDS"/>
    <property type="molecule type" value="Genomic_DNA"/>
</dbReference>
<dbReference type="EMBL" id="CH466529">
    <property type="protein sequence ID" value="EDL19152.1"/>
    <property type="molecule type" value="Genomic_DNA"/>
</dbReference>
<dbReference type="CCDS" id="CCDS51684.1"/>
<dbReference type="RefSeq" id="NP_082745.2">
    <property type="nucleotide sequence ID" value="NM_028469.4"/>
</dbReference>
<dbReference type="SMR" id="Q9CXL3"/>
<dbReference type="BioGRID" id="215841">
    <property type="interactions" value="32"/>
</dbReference>
<dbReference type="FunCoup" id="Q9CXL3">
    <property type="interactions" value="29"/>
</dbReference>
<dbReference type="IntAct" id="Q9CXL3">
    <property type="interactions" value="1"/>
</dbReference>
<dbReference type="MINT" id="Q9CXL3"/>
<dbReference type="STRING" id="10090.ENSMUSP00000069230"/>
<dbReference type="iPTMnet" id="Q9CXL3"/>
<dbReference type="PhosphoSitePlus" id="Q9CXL3"/>
<dbReference type="jPOST" id="Q9CXL3"/>
<dbReference type="PaxDb" id="10090-ENSMUSP00000069230"/>
<dbReference type="PeptideAtlas" id="Q9CXL3"/>
<dbReference type="Pumba" id="Q9CXL3"/>
<dbReference type="Antibodypedia" id="43531">
    <property type="antibodies" value="124 antibodies from 25 providers"/>
</dbReference>
<dbReference type="Ensembl" id="ENSMUST00000066052.12">
    <property type="protein sequence ID" value="ENSMUSP00000069230.8"/>
    <property type="gene ID" value="ENSMUSG00000053553.12"/>
</dbReference>
<dbReference type="GeneID" id="73212"/>
<dbReference type="KEGG" id="mmu:73212"/>
<dbReference type="UCSC" id="uc009agk.1">
    <property type="organism name" value="mouse"/>
</dbReference>
<dbReference type="AGR" id="MGI:1920462"/>
<dbReference type="CTD" id="84310"/>
<dbReference type="MGI" id="MGI:1920462">
    <property type="gene designation" value="3110082I17Rik"/>
</dbReference>
<dbReference type="VEuPathDB" id="HostDB:ENSMUSG00000053553"/>
<dbReference type="eggNOG" id="KOG4829">
    <property type="taxonomic scope" value="Eukaryota"/>
</dbReference>
<dbReference type="GeneTree" id="ENSGT00390000017838"/>
<dbReference type="HOGENOM" id="CLU_091382_2_0_1"/>
<dbReference type="InParanoid" id="Q9CXL3"/>
<dbReference type="OMA" id="CWAENRS"/>
<dbReference type="OrthoDB" id="10261563at2759"/>
<dbReference type="PhylomeDB" id="Q9CXL3"/>
<dbReference type="TreeFam" id="TF326634"/>
<dbReference type="BioGRID-ORCS" id="73212">
    <property type="hits" value="5 hits in 76 CRISPR screens"/>
</dbReference>
<dbReference type="PRO" id="PR:Q9CXL3"/>
<dbReference type="Proteomes" id="UP000000589">
    <property type="component" value="Chromosome 5"/>
</dbReference>
<dbReference type="RNAct" id="Q9CXL3">
    <property type="molecule type" value="protein"/>
</dbReference>
<dbReference type="Bgee" id="ENSMUSG00000053553">
    <property type="expression patterns" value="Expressed in yolk sac and 176 other cell types or tissues"/>
</dbReference>
<dbReference type="ExpressionAtlas" id="Q9CXL3">
    <property type="expression patterns" value="baseline and differential"/>
</dbReference>
<dbReference type="GO" id="GO:0005615">
    <property type="term" value="C:extracellular space"/>
    <property type="evidence" value="ECO:0007669"/>
    <property type="project" value="Ensembl"/>
</dbReference>
<dbReference type="GO" id="GO:0005179">
    <property type="term" value="F:hormone activity"/>
    <property type="evidence" value="ECO:0007669"/>
    <property type="project" value="Ensembl"/>
</dbReference>
<dbReference type="GO" id="GO:0045541">
    <property type="term" value="P:negative regulation of cholesterol biosynthetic process"/>
    <property type="evidence" value="ECO:0007669"/>
    <property type="project" value="Ensembl"/>
</dbReference>
<dbReference type="InterPro" id="IPR019327">
    <property type="entry name" value="WKF"/>
</dbReference>
<dbReference type="PANTHER" id="PTHR22306">
    <property type="entry name" value="CHROMOSOME 7 OPEN READING FRAME 50"/>
    <property type="match status" value="1"/>
</dbReference>
<dbReference type="PANTHER" id="PTHR22306:SF2">
    <property type="entry name" value="CHROMOSOME 7 OPEN READING FRAME 50"/>
    <property type="match status" value="1"/>
</dbReference>
<dbReference type="Pfam" id="PF10180">
    <property type="entry name" value="WKF"/>
    <property type="match status" value="1"/>
</dbReference>
<organism>
    <name type="scientific">Mus musculus</name>
    <name type="common">Mouse</name>
    <dbReference type="NCBI Taxonomy" id="10090"/>
    <lineage>
        <taxon>Eukaryota</taxon>
        <taxon>Metazoa</taxon>
        <taxon>Chordata</taxon>
        <taxon>Craniata</taxon>
        <taxon>Vertebrata</taxon>
        <taxon>Euteleostomi</taxon>
        <taxon>Mammalia</taxon>
        <taxon>Eutheria</taxon>
        <taxon>Euarchontoglires</taxon>
        <taxon>Glires</taxon>
        <taxon>Rodentia</taxon>
        <taxon>Myomorpha</taxon>
        <taxon>Muroidea</taxon>
        <taxon>Muridae</taxon>
        <taxon>Murinae</taxon>
        <taxon>Mus</taxon>
        <taxon>Mus</taxon>
    </lineage>
</organism>
<protein>
    <recommendedName>
        <fullName evidence="6">Cholesin</fullName>
    </recommendedName>
    <alternativeName>
        <fullName>Protein C7orf50 homolog</fullName>
    </alternativeName>
</protein>
<comment type="function">
    <text evidence="4">Hormone secreted from the intestine in response to cholesterol, where it acts to inhibit cholesterol synthesis in the liver and VLDL secretion,leading to a reduction in circulating cholesterol levels. Acts through binding to its receptor, GPR146.</text>
</comment>
<comment type="subcellular location">
    <subcellularLocation>
        <location evidence="4">Secreted</location>
    </subcellularLocation>
    <text evidence="4">Secretion is induced by feeding and cholesterol absorption.</text>
</comment>
<comment type="tissue specificity">
    <text evidence="4">Secreted via exosomes, secreted from the instestine, secretion is induced by feeding and cholesterol absorption. Expressed in enterocytes.</text>
</comment>
<comment type="induction">
    <text evidence="4">Expression is induced by feeding and cholesterol absorption.</text>
</comment>
<comment type="disruption phenotype">
    <text evidence="4">Intestine-specific knockout mice have elevated plasma cholesterol levels with increased cholesterol synthesis and VLDL secretion.</text>
</comment>
<comment type="sequence caution" evidence="5">
    <conflict type="frameshift">
        <sequence resource="EMBL-CDS" id="BAB29235"/>
    </conflict>
</comment>
<reference key="1">
    <citation type="journal article" date="2005" name="Science">
        <title>The transcriptional landscape of the mammalian genome.</title>
        <authorList>
            <person name="Carninci P."/>
            <person name="Kasukawa T."/>
            <person name="Katayama S."/>
            <person name="Gough J."/>
            <person name="Frith M.C."/>
            <person name="Maeda N."/>
            <person name="Oyama R."/>
            <person name="Ravasi T."/>
            <person name="Lenhard B."/>
            <person name="Wells C."/>
            <person name="Kodzius R."/>
            <person name="Shimokawa K."/>
            <person name="Bajic V.B."/>
            <person name="Brenner S.E."/>
            <person name="Batalov S."/>
            <person name="Forrest A.R."/>
            <person name="Zavolan M."/>
            <person name="Davis M.J."/>
            <person name="Wilming L.G."/>
            <person name="Aidinis V."/>
            <person name="Allen J.E."/>
            <person name="Ambesi-Impiombato A."/>
            <person name="Apweiler R."/>
            <person name="Aturaliya R.N."/>
            <person name="Bailey T.L."/>
            <person name="Bansal M."/>
            <person name="Baxter L."/>
            <person name="Beisel K.W."/>
            <person name="Bersano T."/>
            <person name="Bono H."/>
            <person name="Chalk A.M."/>
            <person name="Chiu K.P."/>
            <person name="Choudhary V."/>
            <person name="Christoffels A."/>
            <person name="Clutterbuck D.R."/>
            <person name="Crowe M.L."/>
            <person name="Dalla E."/>
            <person name="Dalrymple B.P."/>
            <person name="de Bono B."/>
            <person name="Della Gatta G."/>
            <person name="di Bernardo D."/>
            <person name="Down T."/>
            <person name="Engstrom P."/>
            <person name="Fagiolini M."/>
            <person name="Faulkner G."/>
            <person name="Fletcher C.F."/>
            <person name="Fukushima T."/>
            <person name="Furuno M."/>
            <person name="Futaki S."/>
            <person name="Gariboldi M."/>
            <person name="Georgii-Hemming P."/>
            <person name="Gingeras T.R."/>
            <person name="Gojobori T."/>
            <person name="Green R.E."/>
            <person name="Gustincich S."/>
            <person name="Harbers M."/>
            <person name="Hayashi Y."/>
            <person name="Hensch T.K."/>
            <person name="Hirokawa N."/>
            <person name="Hill D."/>
            <person name="Huminiecki L."/>
            <person name="Iacono M."/>
            <person name="Ikeo K."/>
            <person name="Iwama A."/>
            <person name="Ishikawa T."/>
            <person name="Jakt M."/>
            <person name="Kanapin A."/>
            <person name="Katoh M."/>
            <person name="Kawasawa Y."/>
            <person name="Kelso J."/>
            <person name="Kitamura H."/>
            <person name="Kitano H."/>
            <person name="Kollias G."/>
            <person name="Krishnan S.P."/>
            <person name="Kruger A."/>
            <person name="Kummerfeld S.K."/>
            <person name="Kurochkin I.V."/>
            <person name="Lareau L.F."/>
            <person name="Lazarevic D."/>
            <person name="Lipovich L."/>
            <person name="Liu J."/>
            <person name="Liuni S."/>
            <person name="McWilliam S."/>
            <person name="Madan Babu M."/>
            <person name="Madera M."/>
            <person name="Marchionni L."/>
            <person name="Matsuda H."/>
            <person name="Matsuzawa S."/>
            <person name="Miki H."/>
            <person name="Mignone F."/>
            <person name="Miyake S."/>
            <person name="Morris K."/>
            <person name="Mottagui-Tabar S."/>
            <person name="Mulder N."/>
            <person name="Nakano N."/>
            <person name="Nakauchi H."/>
            <person name="Ng P."/>
            <person name="Nilsson R."/>
            <person name="Nishiguchi S."/>
            <person name="Nishikawa S."/>
            <person name="Nori F."/>
            <person name="Ohara O."/>
            <person name="Okazaki Y."/>
            <person name="Orlando V."/>
            <person name="Pang K.C."/>
            <person name="Pavan W.J."/>
            <person name="Pavesi G."/>
            <person name="Pesole G."/>
            <person name="Petrovsky N."/>
            <person name="Piazza S."/>
            <person name="Reed J."/>
            <person name="Reid J.F."/>
            <person name="Ring B.Z."/>
            <person name="Ringwald M."/>
            <person name="Rost B."/>
            <person name="Ruan Y."/>
            <person name="Salzberg S.L."/>
            <person name="Sandelin A."/>
            <person name="Schneider C."/>
            <person name="Schoenbach C."/>
            <person name="Sekiguchi K."/>
            <person name="Semple C.A."/>
            <person name="Seno S."/>
            <person name="Sessa L."/>
            <person name="Sheng Y."/>
            <person name="Shibata Y."/>
            <person name="Shimada H."/>
            <person name="Shimada K."/>
            <person name="Silva D."/>
            <person name="Sinclair B."/>
            <person name="Sperling S."/>
            <person name="Stupka E."/>
            <person name="Sugiura K."/>
            <person name="Sultana R."/>
            <person name="Takenaka Y."/>
            <person name="Taki K."/>
            <person name="Tammoja K."/>
            <person name="Tan S.L."/>
            <person name="Tang S."/>
            <person name="Taylor M.S."/>
            <person name="Tegner J."/>
            <person name="Teichmann S.A."/>
            <person name="Ueda H.R."/>
            <person name="van Nimwegen E."/>
            <person name="Verardo R."/>
            <person name="Wei C.L."/>
            <person name="Yagi K."/>
            <person name="Yamanishi H."/>
            <person name="Zabarovsky E."/>
            <person name="Zhu S."/>
            <person name="Zimmer A."/>
            <person name="Hide W."/>
            <person name="Bult C."/>
            <person name="Grimmond S.M."/>
            <person name="Teasdale R.D."/>
            <person name="Liu E.T."/>
            <person name="Brusic V."/>
            <person name="Quackenbush J."/>
            <person name="Wahlestedt C."/>
            <person name="Mattick J.S."/>
            <person name="Hume D.A."/>
            <person name="Kai C."/>
            <person name="Sasaki D."/>
            <person name="Tomaru Y."/>
            <person name="Fukuda S."/>
            <person name="Kanamori-Katayama M."/>
            <person name="Suzuki M."/>
            <person name="Aoki J."/>
            <person name="Arakawa T."/>
            <person name="Iida J."/>
            <person name="Imamura K."/>
            <person name="Itoh M."/>
            <person name="Kato T."/>
            <person name="Kawaji H."/>
            <person name="Kawagashira N."/>
            <person name="Kawashima T."/>
            <person name="Kojima M."/>
            <person name="Kondo S."/>
            <person name="Konno H."/>
            <person name="Nakano K."/>
            <person name="Ninomiya N."/>
            <person name="Nishio T."/>
            <person name="Okada M."/>
            <person name="Plessy C."/>
            <person name="Shibata K."/>
            <person name="Shiraki T."/>
            <person name="Suzuki S."/>
            <person name="Tagami M."/>
            <person name="Waki K."/>
            <person name="Watahiki A."/>
            <person name="Okamura-Oho Y."/>
            <person name="Suzuki H."/>
            <person name="Kawai J."/>
            <person name="Hayashizaki Y."/>
        </authorList>
    </citation>
    <scope>NUCLEOTIDE SEQUENCE [LARGE SCALE MRNA]</scope>
    <source>
        <strain>C57BL/6J</strain>
        <tissue>Embryonic head</tissue>
    </source>
</reference>
<reference key="2">
    <citation type="journal article" date="2009" name="PLoS Biol.">
        <title>Lineage-specific biology revealed by a finished genome assembly of the mouse.</title>
        <authorList>
            <person name="Church D.M."/>
            <person name="Goodstadt L."/>
            <person name="Hillier L.W."/>
            <person name="Zody M.C."/>
            <person name="Goldstein S."/>
            <person name="She X."/>
            <person name="Bult C.J."/>
            <person name="Agarwala R."/>
            <person name="Cherry J.L."/>
            <person name="DiCuccio M."/>
            <person name="Hlavina W."/>
            <person name="Kapustin Y."/>
            <person name="Meric P."/>
            <person name="Maglott D."/>
            <person name="Birtle Z."/>
            <person name="Marques A.C."/>
            <person name="Graves T."/>
            <person name="Zhou S."/>
            <person name="Teague B."/>
            <person name="Potamousis K."/>
            <person name="Churas C."/>
            <person name="Place M."/>
            <person name="Herschleb J."/>
            <person name="Runnheim R."/>
            <person name="Forrest D."/>
            <person name="Amos-Landgraf J."/>
            <person name="Schwartz D.C."/>
            <person name="Cheng Z."/>
            <person name="Lindblad-Toh K."/>
            <person name="Eichler E.E."/>
            <person name="Ponting C.P."/>
        </authorList>
    </citation>
    <scope>NUCLEOTIDE SEQUENCE [LARGE SCALE GENOMIC DNA]</scope>
    <source>
        <strain>C57BL/6J</strain>
    </source>
</reference>
<reference key="3">
    <citation type="submission" date="2005-07" db="EMBL/GenBank/DDBJ databases">
        <authorList>
            <person name="Mural R.J."/>
            <person name="Adams M.D."/>
            <person name="Myers E.W."/>
            <person name="Smith H.O."/>
            <person name="Venter J.C."/>
        </authorList>
    </citation>
    <scope>NUCLEOTIDE SEQUENCE [LARGE SCALE GENOMIC DNA]</scope>
</reference>
<reference key="4">
    <citation type="journal article" date="2009" name="Immunity">
        <title>The phagosomal proteome in interferon-gamma-activated macrophages.</title>
        <authorList>
            <person name="Trost M."/>
            <person name="English L."/>
            <person name="Lemieux S."/>
            <person name="Courcelles M."/>
            <person name="Desjardins M."/>
            <person name="Thibault P."/>
        </authorList>
    </citation>
    <scope>PHOSPHORYLATION [LARGE SCALE ANALYSIS] AT SER-48</scope>
    <scope>IDENTIFICATION BY MASS SPECTROMETRY [LARGE SCALE ANALYSIS]</scope>
</reference>
<reference key="5">
    <citation type="journal article" date="2010" name="Cell">
        <title>A tissue-specific atlas of mouse protein phosphorylation and expression.</title>
        <authorList>
            <person name="Huttlin E.L."/>
            <person name="Jedrychowski M.P."/>
            <person name="Elias J.E."/>
            <person name="Goswami T."/>
            <person name="Rad R."/>
            <person name="Beausoleil S.A."/>
            <person name="Villen J."/>
            <person name="Haas W."/>
            <person name="Sowa M.E."/>
            <person name="Gygi S.P."/>
        </authorList>
    </citation>
    <scope>PHOSPHORYLATION [LARGE SCALE ANALYSIS] AT SER-48 AND SER-52</scope>
    <scope>IDENTIFICATION BY MASS SPECTROMETRY [LARGE SCALE ANALYSIS]</scope>
    <source>
        <tissue>Lung</tissue>
        <tissue>Pancreas</tissue>
        <tissue>Spleen</tissue>
        <tissue>Testis</tissue>
    </source>
</reference>
<reference key="6">
    <citation type="journal article" date="2024" name="Cell">
        <title>A gut-derived hormone regulates cholesterol metabolism.</title>
        <authorList>
            <person name="Hu X."/>
            <person name="Chen F."/>
            <person name="Jia L."/>
            <person name="Long A."/>
            <person name="Peng Y."/>
            <person name="Li X."/>
            <person name="Huang J."/>
            <person name="Wei X."/>
            <person name="Fang X."/>
            <person name="Gao Z."/>
            <person name="Zhang M."/>
            <person name="Liu X."/>
            <person name="Chen Y.G."/>
            <person name="Wang Y."/>
            <person name="Zhang H."/>
            <person name="Wang Y."/>
        </authorList>
    </citation>
    <scope>FUNCTION</scope>
    <scope>TISSUE SPECIFICITY</scope>
    <scope>SUBCELLULAR LOCATION</scope>
    <scope>INDUCTION BY CHOLESTEROL</scope>
    <scope>DISRUPTION PHENOTYPE</scope>
</reference>
<name>CHOLN_MOUSE</name>
<accession>Q9CXL3</accession>
<accession>G5E8F7</accession>
<accession>Q6PDQ0</accession>
<gene>
    <name type="primary">Chlsn</name>
    <name evidence="7" type="synonym">3110082I17Rik</name>
</gene>
<evidence type="ECO:0000250" key="1">
    <source>
        <dbReference type="UniProtKB" id="Q5I0E3"/>
    </source>
</evidence>
<evidence type="ECO:0000250" key="2">
    <source>
        <dbReference type="UniProtKB" id="Q9BRJ6"/>
    </source>
</evidence>
<evidence type="ECO:0000256" key="3">
    <source>
        <dbReference type="SAM" id="MobiDB-lite"/>
    </source>
</evidence>
<evidence type="ECO:0000269" key="4">
    <source>
    </source>
</evidence>
<evidence type="ECO:0000305" key="5"/>
<evidence type="ECO:0000305" key="6">
    <source>
    </source>
</evidence>
<evidence type="ECO:0000312" key="7">
    <source>
        <dbReference type="MGI" id="MGI:1920462"/>
    </source>
</evidence>
<evidence type="ECO:0007744" key="8">
    <source>
    </source>
</evidence>
<evidence type="ECO:0007744" key="9">
    <source>
    </source>
</evidence>
<proteinExistence type="evidence at protein level"/>
<sequence length="195" mass="22168">MAKHKRKGLEGTGKESKRQKITPAEETPRTSEAGPDKETASTLVQEASPELSPEERRVLERKLKKERKKEEKKRLREAGIAATQTAKVQTLPAKPSAATLALEYLQGWAQKQESWRFQKTRQTWLLLHMYDEDKVPDEHFPTLLDYLEGLRGSARELTVRKAEALMQKLDEAEPEDSGGSPGKVQRLRQVLQLLS</sequence>
<feature type="chain" id="PRO_0000309511" description="Cholesin">
    <location>
        <begin position="1"/>
        <end position="195"/>
    </location>
</feature>
<feature type="region of interest" description="Disordered" evidence="3">
    <location>
        <begin position="1"/>
        <end position="78"/>
    </location>
</feature>
<feature type="compositionally biased region" description="Basic and acidic residues" evidence="3">
    <location>
        <begin position="8"/>
        <end position="18"/>
    </location>
</feature>
<feature type="compositionally biased region" description="Basic and acidic residues" evidence="3">
    <location>
        <begin position="26"/>
        <end position="39"/>
    </location>
</feature>
<feature type="compositionally biased region" description="Basic and acidic residues" evidence="3">
    <location>
        <begin position="53"/>
        <end position="77"/>
    </location>
</feature>
<feature type="modified residue" description="Phosphoserine" evidence="1">
    <location>
        <position position="41"/>
    </location>
</feature>
<feature type="modified residue" description="Phosphoserine" evidence="8 9">
    <location>
        <position position="48"/>
    </location>
</feature>
<feature type="modified residue" description="Phosphoserine" evidence="9">
    <location>
        <position position="52"/>
    </location>
</feature>
<feature type="modified residue" description="Phosphoserine" evidence="2">
    <location>
        <position position="96"/>
    </location>
</feature>
<feature type="sequence conflict" description="In Ref. 1; BAB29235." evidence="5" ref="1">
    <original>P</original>
    <variation>R</variation>
    <location>
        <position position="28"/>
    </location>
</feature>
<feature type="sequence conflict" description="In Ref. 1; BAB29235." evidence="5" ref="1">
    <original>P</original>
    <variation>R</variation>
    <location>
        <position position="181"/>
    </location>
</feature>
<feature type="sequence conflict" description="In Ref. 1; BAB29235." evidence="5" ref="1">
    <original>R</original>
    <variation>H</variation>
    <location>
        <position position="188"/>
    </location>
</feature>